<accession>Q089Q0</accession>
<proteinExistence type="inferred from homology"/>
<gene>
    <name evidence="1" type="primary">rpsS</name>
    <name type="ordered locus">Sfri_0152</name>
</gene>
<sequence>MPRSLKKGPFIDLHLLKKVEKAMEAGDKKPIKTWSRRSMIIPNMIGLTIAVHNGRQHVPVFVTDEMIGHKLGEFSPTRTYRGHAADKKAKKR</sequence>
<evidence type="ECO:0000255" key="1">
    <source>
        <dbReference type="HAMAP-Rule" id="MF_00531"/>
    </source>
</evidence>
<evidence type="ECO:0000305" key="2"/>
<name>RS19_SHEFN</name>
<keyword id="KW-1185">Reference proteome</keyword>
<keyword id="KW-0687">Ribonucleoprotein</keyword>
<keyword id="KW-0689">Ribosomal protein</keyword>
<keyword id="KW-0694">RNA-binding</keyword>
<keyword id="KW-0699">rRNA-binding</keyword>
<dbReference type="EMBL" id="CP000447">
    <property type="protein sequence ID" value="ABI70015.1"/>
    <property type="molecule type" value="Genomic_DNA"/>
</dbReference>
<dbReference type="RefSeq" id="WP_006083596.1">
    <property type="nucleotide sequence ID" value="NC_008345.1"/>
</dbReference>
<dbReference type="SMR" id="Q089Q0"/>
<dbReference type="STRING" id="318167.Sfri_0152"/>
<dbReference type="GeneID" id="94726190"/>
<dbReference type="KEGG" id="sfr:Sfri_0152"/>
<dbReference type="eggNOG" id="COG0185">
    <property type="taxonomic scope" value="Bacteria"/>
</dbReference>
<dbReference type="HOGENOM" id="CLU_144911_0_1_6"/>
<dbReference type="OrthoDB" id="9797833at2"/>
<dbReference type="Proteomes" id="UP000000684">
    <property type="component" value="Chromosome"/>
</dbReference>
<dbReference type="GO" id="GO:0005737">
    <property type="term" value="C:cytoplasm"/>
    <property type="evidence" value="ECO:0007669"/>
    <property type="project" value="UniProtKB-ARBA"/>
</dbReference>
<dbReference type="GO" id="GO:0015935">
    <property type="term" value="C:small ribosomal subunit"/>
    <property type="evidence" value="ECO:0007669"/>
    <property type="project" value="InterPro"/>
</dbReference>
<dbReference type="GO" id="GO:0019843">
    <property type="term" value="F:rRNA binding"/>
    <property type="evidence" value="ECO:0007669"/>
    <property type="project" value="UniProtKB-UniRule"/>
</dbReference>
<dbReference type="GO" id="GO:0003735">
    <property type="term" value="F:structural constituent of ribosome"/>
    <property type="evidence" value="ECO:0007669"/>
    <property type="project" value="InterPro"/>
</dbReference>
<dbReference type="GO" id="GO:0000028">
    <property type="term" value="P:ribosomal small subunit assembly"/>
    <property type="evidence" value="ECO:0007669"/>
    <property type="project" value="TreeGrafter"/>
</dbReference>
<dbReference type="GO" id="GO:0006412">
    <property type="term" value="P:translation"/>
    <property type="evidence" value="ECO:0007669"/>
    <property type="project" value="UniProtKB-UniRule"/>
</dbReference>
<dbReference type="FunFam" id="3.30.860.10:FF:000001">
    <property type="entry name" value="30S ribosomal protein S19"/>
    <property type="match status" value="1"/>
</dbReference>
<dbReference type="Gene3D" id="3.30.860.10">
    <property type="entry name" value="30s Ribosomal Protein S19, Chain A"/>
    <property type="match status" value="1"/>
</dbReference>
<dbReference type="HAMAP" id="MF_00531">
    <property type="entry name" value="Ribosomal_uS19"/>
    <property type="match status" value="1"/>
</dbReference>
<dbReference type="InterPro" id="IPR002222">
    <property type="entry name" value="Ribosomal_uS19"/>
</dbReference>
<dbReference type="InterPro" id="IPR005732">
    <property type="entry name" value="Ribosomal_uS19_bac-type"/>
</dbReference>
<dbReference type="InterPro" id="IPR020934">
    <property type="entry name" value="Ribosomal_uS19_CS"/>
</dbReference>
<dbReference type="InterPro" id="IPR023575">
    <property type="entry name" value="Ribosomal_uS19_SF"/>
</dbReference>
<dbReference type="NCBIfam" id="TIGR01050">
    <property type="entry name" value="rpsS_bact"/>
    <property type="match status" value="1"/>
</dbReference>
<dbReference type="PANTHER" id="PTHR11880">
    <property type="entry name" value="RIBOSOMAL PROTEIN S19P FAMILY MEMBER"/>
    <property type="match status" value="1"/>
</dbReference>
<dbReference type="PANTHER" id="PTHR11880:SF8">
    <property type="entry name" value="SMALL RIBOSOMAL SUBUNIT PROTEIN US19M"/>
    <property type="match status" value="1"/>
</dbReference>
<dbReference type="Pfam" id="PF00203">
    <property type="entry name" value="Ribosomal_S19"/>
    <property type="match status" value="1"/>
</dbReference>
<dbReference type="PIRSF" id="PIRSF002144">
    <property type="entry name" value="Ribosomal_S19"/>
    <property type="match status" value="1"/>
</dbReference>
<dbReference type="PRINTS" id="PR00975">
    <property type="entry name" value="RIBOSOMALS19"/>
</dbReference>
<dbReference type="SUPFAM" id="SSF54570">
    <property type="entry name" value="Ribosomal protein S19"/>
    <property type="match status" value="1"/>
</dbReference>
<dbReference type="PROSITE" id="PS00323">
    <property type="entry name" value="RIBOSOMAL_S19"/>
    <property type="match status" value="1"/>
</dbReference>
<feature type="chain" id="PRO_0000265428" description="Small ribosomal subunit protein uS19">
    <location>
        <begin position="1"/>
        <end position="92"/>
    </location>
</feature>
<comment type="function">
    <text evidence="1">Protein S19 forms a complex with S13 that binds strongly to the 16S ribosomal RNA.</text>
</comment>
<comment type="similarity">
    <text evidence="1">Belongs to the universal ribosomal protein uS19 family.</text>
</comment>
<protein>
    <recommendedName>
        <fullName evidence="1">Small ribosomal subunit protein uS19</fullName>
    </recommendedName>
    <alternativeName>
        <fullName evidence="2">30S ribosomal protein S19</fullName>
    </alternativeName>
</protein>
<reference key="1">
    <citation type="submission" date="2006-08" db="EMBL/GenBank/DDBJ databases">
        <title>Complete sequence of Shewanella frigidimarina NCIMB 400.</title>
        <authorList>
            <consortium name="US DOE Joint Genome Institute"/>
            <person name="Copeland A."/>
            <person name="Lucas S."/>
            <person name="Lapidus A."/>
            <person name="Barry K."/>
            <person name="Detter J.C."/>
            <person name="Glavina del Rio T."/>
            <person name="Hammon N."/>
            <person name="Israni S."/>
            <person name="Dalin E."/>
            <person name="Tice H."/>
            <person name="Pitluck S."/>
            <person name="Fredrickson J.K."/>
            <person name="Kolker E."/>
            <person name="McCuel L.A."/>
            <person name="DiChristina T."/>
            <person name="Nealson K.H."/>
            <person name="Newman D."/>
            <person name="Tiedje J.M."/>
            <person name="Zhou J."/>
            <person name="Romine M.F."/>
            <person name="Culley D.E."/>
            <person name="Serres M."/>
            <person name="Chertkov O."/>
            <person name="Brettin T."/>
            <person name="Bruce D."/>
            <person name="Han C."/>
            <person name="Tapia R."/>
            <person name="Gilna P."/>
            <person name="Schmutz J."/>
            <person name="Larimer F."/>
            <person name="Land M."/>
            <person name="Hauser L."/>
            <person name="Kyrpides N."/>
            <person name="Mikhailova N."/>
            <person name="Richardson P."/>
        </authorList>
    </citation>
    <scope>NUCLEOTIDE SEQUENCE [LARGE SCALE GENOMIC DNA]</scope>
    <source>
        <strain>NCIMB 400</strain>
    </source>
</reference>
<organism>
    <name type="scientific">Shewanella frigidimarina (strain NCIMB 400)</name>
    <dbReference type="NCBI Taxonomy" id="318167"/>
    <lineage>
        <taxon>Bacteria</taxon>
        <taxon>Pseudomonadati</taxon>
        <taxon>Pseudomonadota</taxon>
        <taxon>Gammaproteobacteria</taxon>
        <taxon>Alteromonadales</taxon>
        <taxon>Shewanellaceae</taxon>
        <taxon>Shewanella</taxon>
    </lineage>
</organism>